<comment type="function">
    <text evidence="1">Is required not only for elongation of protein synthesis but also for the initiation of all mRNA translation through initiator tRNA(fMet) aminoacylation.</text>
</comment>
<comment type="catalytic activity">
    <reaction evidence="1">
        <text>tRNA(Met) + L-methionine + ATP = L-methionyl-tRNA(Met) + AMP + diphosphate</text>
        <dbReference type="Rhea" id="RHEA:13481"/>
        <dbReference type="Rhea" id="RHEA-COMP:9667"/>
        <dbReference type="Rhea" id="RHEA-COMP:9698"/>
        <dbReference type="ChEBI" id="CHEBI:30616"/>
        <dbReference type="ChEBI" id="CHEBI:33019"/>
        <dbReference type="ChEBI" id="CHEBI:57844"/>
        <dbReference type="ChEBI" id="CHEBI:78442"/>
        <dbReference type="ChEBI" id="CHEBI:78530"/>
        <dbReference type="ChEBI" id="CHEBI:456215"/>
        <dbReference type="EC" id="6.1.1.10"/>
    </reaction>
</comment>
<comment type="cofactor">
    <cofactor evidence="1">
        <name>Zn(2+)</name>
        <dbReference type="ChEBI" id="CHEBI:29105"/>
    </cofactor>
    <text evidence="1">Binds 1 zinc ion per subunit.</text>
</comment>
<comment type="subunit">
    <text evidence="1">Monomer.</text>
</comment>
<comment type="subcellular location">
    <subcellularLocation>
        <location evidence="1">Cytoplasm</location>
    </subcellularLocation>
</comment>
<comment type="similarity">
    <text evidence="1">Belongs to the class-I aminoacyl-tRNA synthetase family. MetG type 2A subfamily.</text>
</comment>
<organism>
    <name type="scientific">Nostoc sp. (strain PCC 7120 / SAG 25.82 / UTEX 2576)</name>
    <dbReference type="NCBI Taxonomy" id="103690"/>
    <lineage>
        <taxon>Bacteria</taxon>
        <taxon>Bacillati</taxon>
        <taxon>Cyanobacteriota</taxon>
        <taxon>Cyanophyceae</taxon>
        <taxon>Nostocales</taxon>
        <taxon>Nostocaceae</taxon>
        <taxon>Nostoc</taxon>
    </lineage>
</organism>
<feature type="chain" id="PRO_0000139205" description="Methionine--tRNA ligase">
    <location>
        <begin position="1"/>
        <end position="530"/>
    </location>
</feature>
<feature type="short sequence motif" description="'HIGH' region">
    <location>
        <begin position="18"/>
        <end position="28"/>
    </location>
</feature>
<feature type="short sequence motif" description="'KMSKS' region">
    <location>
        <begin position="307"/>
        <end position="311"/>
    </location>
</feature>
<feature type="binding site" evidence="1">
    <location>
        <position position="133"/>
    </location>
    <ligand>
        <name>Zn(2+)</name>
        <dbReference type="ChEBI" id="CHEBI:29105"/>
    </ligand>
</feature>
<feature type="binding site" evidence="1">
    <location>
        <position position="136"/>
    </location>
    <ligand>
        <name>Zn(2+)</name>
        <dbReference type="ChEBI" id="CHEBI:29105"/>
    </ligand>
</feature>
<feature type="binding site" evidence="1">
    <location>
        <position position="151"/>
    </location>
    <ligand>
        <name>Zn(2+)</name>
        <dbReference type="ChEBI" id="CHEBI:29105"/>
    </ligand>
</feature>
<feature type="binding site" evidence="1">
    <location>
        <position position="154"/>
    </location>
    <ligand>
        <name>Zn(2+)</name>
        <dbReference type="ChEBI" id="CHEBI:29105"/>
    </ligand>
</feature>
<feature type="binding site" evidence="1">
    <location>
        <position position="310"/>
    </location>
    <ligand>
        <name>ATP</name>
        <dbReference type="ChEBI" id="CHEBI:30616"/>
    </ligand>
</feature>
<accession>Q8Z068</accession>
<dbReference type="EC" id="6.1.1.10" evidence="1"/>
<dbReference type="EMBL" id="BA000019">
    <property type="protein sequence ID" value="BAB77757.1"/>
    <property type="molecule type" value="Genomic_DNA"/>
</dbReference>
<dbReference type="PIR" id="AI1835">
    <property type="entry name" value="AI1835"/>
</dbReference>
<dbReference type="RefSeq" id="WP_010994410.1">
    <property type="nucleotide sequence ID" value="NZ_RSCN01000026.1"/>
</dbReference>
<dbReference type="SMR" id="Q8Z068"/>
<dbReference type="STRING" id="103690.gene:10492240"/>
<dbReference type="KEGG" id="ana:all0233"/>
<dbReference type="eggNOG" id="COG0143">
    <property type="taxonomic scope" value="Bacteria"/>
</dbReference>
<dbReference type="OrthoDB" id="9810191at2"/>
<dbReference type="Proteomes" id="UP000002483">
    <property type="component" value="Chromosome"/>
</dbReference>
<dbReference type="GO" id="GO:0005737">
    <property type="term" value="C:cytoplasm"/>
    <property type="evidence" value="ECO:0007669"/>
    <property type="project" value="UniProtKB-SubCell"/>
</dbReference>
<dbReference type="GO" id="GO:0005524">
    <property type="term" value="F:ATP binding"/>
    <property type="evidence" value="ECO:0007669"/>
    <property type="project" value="UniProtKB-UniRule"/>
</dbReference>
<dbReference type="GO" id="GO:0046872">
    <property type="term" value="F:metal ion binding"/>
    <property type="evidence" value="ECO:0007669"/>
    <property type="project" value="UniProtKB-KW"/>
</dbReference>
<dbReference type="GO" id="GO:0004825">
    <property type="term" value="F:methionine-tRNA ligase activity"/>
    <property type="evidence" value="ECO:0007669"/>
    <property type="project" value="UniProtKB-UniRule"/>
</dbReference>
<dbReference type="GO" id="GO:0006431">
    <property type="term" value="P:methionyl-tRNA aminoacylation"/>
    <property type="evidence" value="ECO:0007669"/>
    <property type="project" value="UniProtKB-UniRule"/>
</dbReference>
<dbReference type="CDD" id="cd07957">
    <property type="entry name" value="Anticodon_Ia_Met"/>
    <property type="match status" value="1"/>
</dbReference>
<dbReference type="CDD" id="cd00814">
    <property type="entry name" value="MetRS_core"/>
    <property type="match status" value="1"/>
</dbReference>
<dbReference type="FunFam" id="2.170.220.10:FF:000001">
    <property type="entry name" value="methionine--tRNA ligase, mitochondrial"/>
    <property type="match status" value="1"/>
</dbReference>
<dbReference type="Gene3D" id="2.170.220.10">
    <property type="match status" value="1"/>
</dbReference>
<dbReference type="Gene3D" id="3.40.50.620">
    <property type="entry name" value="HUPs"/>
    <property type="match status" value="1"/>
</dbReference>
<dbReference type="Gene3D" id="1.10.730.10">
    <property type="entry name" value="Isoleucyl-tRNA Synthetase, Domain 1"/>
    <property type="match status" value="1"/>
</dbReference>
<dbReference type="HAMAP" id="MF_01228">
    <property type="entry name" value="Met_tRNA_synth_type2"/>
    <property type="match status" value="1"/>
</dbReference>
<dbReference type="InterPro" id="IPR041872">
    <property type="entry name" value="Anticodon_Met"/>
</dbReference>
<dbReference type="InterPro" id="IPR014758">
    <property type="entry name" value="Met-tRNA_synth"/>
</dbReference>
<dbReference type="InterPro" id="IPR023457">
    <property type="entry name" value="Met-tRNA_synth_2"/>
</dbReference>
<dbReference type="InterPro" id="IPR015413">
    <property type="entry name" value="Methionyl/Leucyl_tRNA_Synth"/>
</dbReference>
<dbReference type="InterPro" id="IPR033911">
    <property type="entry name" value="MetRS_core"/>
</dbReference>
<dbReference type="InterPro" id="IPR014729">
    <property type="entry name" value="Rossmann-like_a/b/a_fold"/>
</dbReference>
<dbReference type="InterPro" id="IPR009080">
    <property type="entry name" value="tRNAsynth_Ia_anticodon-bd"/>
</dbReference>
<dbReference type="NCBIfam" id="TIGR00398">
    <property type="entry name" value="metG"/>
    <property type="match status" value="1"/>
</dbReference>
<dbReference type="NCBIfam" id="NF008900">
    <property type="entry name" value="PRK12267.1"/>
    <property type="match status" value="1"/>
</dbReference>
<dbReference type="PANTHER" id="PTHR43326:SF1">
    <property type="entry name" value="METHIONINE--TRNA LIGASE, MITOCHONDRIAL"/>
    <property type="match status" value="1"/>
</dbReference>
<dbReference type="PANTHER" id="PTHR43326">
    <property type="entry name" value="METHIONYL-TRNA SYNTHETASE"/>
    <property type="match status" value="1"/>
</dbReference>
<dbReference type="Pfam" id="PF19303">
    <property type="entry name" value="Anticodon_3"/>
    <property type="match status" value="1"/>
</dbReference>
<dbReference type="Pfam" id="PF09334">
    <property type="entry name" value="tRNA-synt_1g"/>
    <property type="match status" value="1"/>
</dbReference>
<dbReference type="PRINTS" id="PR01041">
    <property type="entry name" value="TRNASYNTHMET"/>
</dbReference>
<dbReference type="SUPFAM" id="SSF47323">
    <property type="entry name" value="Anticodon-binding domain of a subclass of class I aminoacyl-tRNA synthetases"/>
    <property type="match status" value="1"/>
</dbReference>
<dbReference type="SUPFAM" id="SSF52374">
    <property type="entry name" value="Nucleotidylyl transferase"/>
    <property type="match status" value="1"/>
</dbReference>
<protein>
    <recommendedName>
        <fullName evidence="1">Methionine--tRNA ligase</fullName>
        <ecNumber evidence="1">6.1.1.10</ecNumber>
    </recommendedName>
    <alternativeName>
        <fullName evidence="1">Methionyl-tRNA synthetase</fullName>
        <shortName evidence="1">MetRS</shortName>
    </alternativeName>
</protein>
<keyword id="KW-0030">Aminoacyl-tRNA synthetase</keyword>
<keyword id="KW-0067">ATP-binding</keyword>
<keyword id="KW-0963">Cytoplasm</keyword>
<keyword id="KW-0436">Ligase</keyword>
<keyword id="KW-0479">Metal-binding</keyword>
<keyword id="KW-0547">Nucleotide-binding</keyword>
<keyword id="KW-0648">Protein biosynthesis</keyword>
<keyword id="KW-1185">Reference proteome</keyword>
<keyword id="KW-0862">Zinc</keyword>
<gene>
    <name evidence="1" type="primary">metG</name>
    <name type="ordered locus">all0233</name>
</gene>
<proteinExistence type="inferred from homology"/>
<reference key="1">
    <citation type="journal article" date="2001" name="DNA Res.">
        <title>Complete genomic sequence of the filamentous nitrogen-fixing cyanobacterium Anabaena sp. strain PCC 7120.</title>
        <authorList>
            <person name="Kaneko T."/>
            <person name="Nakamura Y."/>
            <person name="Wolk C.P."/>
            <person name="Kuritz T."/>
            <person name="Sasamoto S."/>
            <person name="Watanabe A."/>
            <person name="Iriguchi M."/>
            <person name="Ishikawa A."/>
            <person name="Kawashima K."/>
            <person name="Kimura T."/>
            <person name="Kishida Y."/>
            <person name="Kohara M."/>
            <person name="Matsumoto M."/>
            <person name="Matsuno A."/>
            <person name="Muraki A."/>
            <person name="Nakazaki N."/>
            <person name="Shimpo S."/>
            <person name="Sugimoto M."/>
            <person name="Takazawa M."/>
            <person name="Yamada M."/>
            <person name="Yasuda M."/>
            <person name="Tabata S."/>
        </authorList>
    </citation>
    <scope>NUCLEOTIDE SEQUENCE [LARGE SCALE GENOMIC DNA]</scope>
    <source>
        <strain>PCC 7120 / SAG 25.82 / UTEX 2576</strain>
    </source>
</reference>
<evidence type="ECO:0000255" key="1">
    <source>
        <dbReference type="HAMAP-Rule" id="MF_01228"/>
    </source>
</evidence>
<sequence length="530" mass="60602">MNLVNKAEKTFALTTPLYYVNDVPHIGSAYTTMAADAVARFQKLLGRDVLLITGTDEHGQKIQRSAESLGKAPQEFCDEIVPSFMSLWRLLNIQYDRFSRTTAVRHKAIVDEFFARVWEAGDIYQGQQKGWYCVSCEEFKEERELLEGNRCPIHVNKEVEWRDEQNYFFRLSKYQTQLEEFYQSHPDFIQPESRRNEVLNFVSQGLQDFSISRVNLDWGFPVPNDPKHTLYVWFDALLAYVTALLDPEDEPTLENALGKWWPINLHLIGKDILRFHAVYWPAMLLSAGLPLPDRVFGHGFLTKDGQKMGKSLGNTVDPVGLVQQYGSDAVRYYFLKEIEFGKDGDFNEVRFIHVLNADLANDLGNLLNRTLNMVKKYCANYALSITNEDIPAENTLKALGVDLGAKVKQAYEVLAFNQACGVVLSLVQASNKFIDDQAPWSLYKQERQQEVETVLYTVLESVRLAAYLLSPVIPNISSNIYQQLGFGINFNEQTDITPFAIHAQWGLLSNKQQLGQPQPIFKRIEQTKNV</sequence>
<name>SYM_NOSS1</name>